<feature type="chain" id="PRO_0000307945" description="Solute carrier family 22 member 12">
    <location>
        <begin position="1"/>
        <end position="553"/>
    </location>
</feature>
<feature type="transmembrane region" description="Helical" evidence="2">
    <location>
        <begin position="10"/>
        <end position="30"/>
    </location>
</feature>
<feature type="transmembrane region" description="Helical" evidence="2">
    <location>
        <begin position="146"/>
        <end position="166"/>
    </location>
</feature>
<feature type="transmembrane region" description="Helical" evidence="2">
    <location>
        <begin position="182"/>
        <end position="202"/>
    </location>
</feature>
<feature type="transmembrane region" description="Helical" evidence="2">
    <location>
        <begin position="204"/>
        <end position="224"/>
    </location>
</feature>
<feature type="transmembrane region" description="Helical" evidence="2">
    <location>
        <begin position="232"/>
        <end position="252"/>
    </location>
</feature>
<feature type="transmembrane region" description="Helical" evidence="2">
    <location>
        <begin position="260"/>
        <end position="280"/>
    </location>
</feature>
<feature type="transmembrane region" description="Helical" evidence="2">
    <location>
        <begin position="351"/>
        <end position="371"/>
    </location>
</feature>
<feature type="transmembrane region" description="Helical" evidence="2">
    <location>
        <begin position="378"/>
        <end position="398"/>
    </location>
</feature>
<feature type="transmembrane region" description="Helical" evidence="2">
    <location>
        <begin position="412"/>
        <end position="432"/>
    </location>
</feature>
<feature type="transmembrane region" description="Helical" evidence="2">
    <location>
        <begin position="435"/>
        <end position="455"/>
    </location>
</feature>
<feature type="transmembrane region" description="Helical" evidence="2">
    <location>
        <begin position="466"/>
        <end position="486"/>
    </location>
</feature>
<feature type="transmembrane region" description="Helical" evidence="2">
    <location>
        <begin position="495"/>
        <end position="515"/>
    </location>
</feature>
<feature type="modified residue" description="Phosphoserine" evidence="9">
    <location>
        <position position="534"/>
    </location>
</feature>
<feature type="modified residue" description="Phosphothreonine" evidence="9">
    <location>
        <position position="542"/>
    </location>
</feature>
<feature type="glycosylation site" description="N-linked (GlcNAc...) asparagine" evidence="2">
    <location>
        <position position="56"/>
    </location>
</feature>
<feature type="sequence conflict" description="In Ref. 1; BAA23875." evidence="6" ref="1">
    <original>F</original>
    <variation>L</variation>
    <location>
        <position position="407"/>
    </location>
</feature>
<keyword id="KW-1003">Cell membrane</keyword>
<keyword id="KW-0325">Glycoprotein</keyword>
<keyword id="KW-0406">Ion transport</keyword>
<keyword id="KW-0472">Membrane</keyword>
<keyword id="KW-0597">Phosphoprotein</keyword>
<keyword id="KW-1185">Reference proteome</keyword>
<keyword id="KW-0812">Transmembrane</keyword>
<keyword id="KW-1133">Transmembrane helix</keyword>
<keyword id="KW-0813">Transport</keyword>
<dbReference type="EMBL" id="AB005451">
    <property type="protein sequence ID" value="BAA23875.1"/>
    <property type="molecule type" value="mRNA"/>
</dbReference>
<dbReference type="EMBL" id="BC035927">
    <property type="protein sequence ID" value="AAH35927.1"/>
    <property type="molecule type" value="mRNA"/>
</dbReference>
<dbReference type="CCDS" id="CCDS29505.1"/>
<dbReference type="RefSeq" id="NP_033229.3">
    <property type="nucleotide sequence ID" value="NM_009203.3"/>
</dbReference>
<dbReference type="SMR" id="Q8CFZ5"/>
<dbReference type="FunCoup" id="Q8CFZ5">
    <property type="interactions" value="26"/>
</dbReference>
<dbReference type="STRING" id="10090.ENSMUSP00000109078"/>
<dbReference type="TCDB" id="2.A.1.19.14">
    <property type="family name" value="the major facilitator superfamily (mfs)"/>
</dbReference>
<dbReference type="GlyCosmos" id="Q8CFZ5">
    <property type="glycosylation" value="1 site, No reported glycans"/>
</dbReference>
<dbReference type="GlyGen" id="Q8CFZ5">
    <property type="glycosylation" value="1 site"/>
</dbReference>
<dbReference type="iPTMnet" id="Q8CFZ5"/>
<dbReference type="PhosphoSitePlus" id="Q8CFZ5"/>
<dbReference type="jPOST" id="Q8CFZ5"/>
<dbReference type="PaxDb" id="10090-ENSMUSP00000109078"/>
<dbReference type="PeptideAtlas" id="Q8CFZ5"/>
<dbReference type="ProteomicsDB" id="260757"/>
<dbReference type="DNASU" id="20521"/>
<dbReference type="GeneID" id="20521"/>
<dbReference type="KEGG" id="mmu:20521"/>
<dbReference type="UCSC" id="uc012bho.1">
    <property type="organism name" value="mouse"/>
</dbReference>
<dbReference type="AGR" id="MGI:1195269"/>
<dbReference type="CTD" id="116085"/>
<dbReference type="MGI" id="MGI:1195269">
    <property type="gene designation" value="Slc22a12"/>
</dbReference>
<dbReference type="eggNOG" id="KOG0255">
    <property type="taxonomic scope" value="Eukaryota"/>
</dbReference>
<dbReference type="InParanoid" id="Q8CFZ5"/>
<dbReference type="OrthoDB" id="2544694at2759"/>
<dbReference type="PhylomeDB" id="Q8CFZ5"/>
<dbReference type="TreeFam" id="TF315847"/>
<dbReference type="Reactome" id="R-MMU-561048">
    <property type="pathway name" value="Organic anion transport"/>
</dbReference>
<dbReference type="BioGRID-ORCS" id="20521">
    <property type="hits" value="0 hits in 78 CRISPR screens"/>
</dbReference>
<dbReference type="ChiTaRS" id="Slc22a12">
    <property type="organism name" value="mouse"/>
</dbReference>
<dbReference type="PRO" id="PR:Q8CFZ5"/>
<dbReference type="Proteomes" id="UP000000589">
    <property type="component" value="Unplaced"/>
</dbReference>
<dbReference type="RNAct" id="Q8CFZ5">
    <property type="molecule type" value="protein"/>
</dbReference>
<dbReference type="GO" id="GO:0016324">
    <property type="term" value="C:apical plasma membrane"/>
    <property type="evidence" value="ECO:0000250"/>
    <property type="project" value="UniProtKB"/>
</dbReference>
<dbReference type="GO" id="GO:0031526">
    <property type="term" value="C:brush border membrane"/>
    <property type="evidence" value="ECO:0000314"/>
    <property type="project" value="UniProtKB"/>
</dbReference>
<dbReference type="GO" id="GO:0016020">
    <property type="term" value="C:membrane"/>
    <property type="evidence" value="ECO:0000314"/>
    <property type="project" value="UniProtKB"/>
</dbReference>
<dbReference type="GO" id="GO:0005886">
    <property type="term" value="C:plasma membrane"/>
    <property type="evidence" value="ECO:0000250"/>
    <property type="project" value="UniProtKB"/>
</dbReference>
<dbReference type="GO" id="GO:0030165">
    <property type="term" value="F:PDZ domain binding"/>
    <property type="evidence" value="ECO:0000250"/>
    <property type="project" value="UniProtKB"/>
</dbReference>
<dbReference type="GO" id="GO:0015143">
    <property type="term" value="F:urate transmembrane transporter activity"/>
    <property type="evidence" value="ECO:0000314"/>
    <property type="project" value="UniProtKB"/>
</dbReference>
<dbReference type="GO" id="GO:0006811">
    <property type="term" value="P:monoatomic ion transport"/>
    <property type="evidence" value="ECO:0007669"/>
    <property type="project" value="UniProtKB-KW"/>
</dbReference>
<dbReference type="GO" id="GO:0009410">
    <property type="term" value="P:response to xenobiotic stimulus"/>
    <property type="evidence" value="ECO:0000250"/>
    <property type="project" value="UniProtKB"/>
</dbReference>
<dbReference type="GO" id="GO:0015747">
    <property type="term" value="P:urate transport"/>
    <property type="evidence" value="ECO:0000314"/>
    <property type="project" value="UniProtKB"/>
</dbReference>
<dbReference type="CDD" id="cd17374">
    <property type="entry name" value="MFS_OAT"/>
    <property type="match status" value="1"/>
</dbReference>
<dbReference type="FunFam" id="1.20.1250.20:FF:000023">
    <property type="entry name" value="Solute carrier family 22 member 6"/>
    <property type="match status" value="1"/>
</dbReference>
<dbReference type="Gene3D" id="1.20.1250.20">
    <property type="entry name" value="MFS general substrate transporter like domains"/>
    <property type="match status" value="1"/>
</dbReference>
<dbReference type="InterPro" id="IPR020846">
    <property type="entry name" value="MFS_dom"/>
</dbReference>
<dbReference type="InterPro" id="IPR005828">
    <property type="entry name" value="MFS_sugar_transport-like"/>
</dbReference>
<dbReference type="InterPro" id="IPR036259">
    <property type="entry name" value="MFS_trans_sf"/>
</dbReference>
<dbReference type="PANTHER" id="PTHR24064">
    <property type="entry name" value="SOLUTE CARRIER FAMILY 22 MEMBER"/>
    <property type="match status" value="1"/>
</dbReference>
<dbReference type="Pfam" id="PF00083">
    <property type="entry name" value="Sugar_tr"/>
    <property type="match status" value="1"/>
</dbReference>
<dbReference type="SUPFAM" id="SSF103473">
    <property type="entry name" value="MFS general substrate transporter"/>
    <property type="match status" value="1"/>
</dbReference>
<dbReference type="PROSITE" id="PS50850">
    <property type="entry name" value="MFS"/>
    <property type="match status" value="1"/>
</dbReference>
<accession>Q8CFZ5</accession>
<accession>O54778</accession>
<comment type="function">
    <text evidence="1 3">Electroneutral antiporter that translocates urate across the apical membrane of proximal tubular cells in exchange for monovalent organic or inorganic anions (PubMed:14747372). Involved in renal reabsorption of urate and helps maintaining blood levels of uric acid (PubMed:14747372). Mediates urate uptake by an exchange with organic anions such as (S)-lactate and nicotinate, and inorganic anion Cl(-) (PubMed:14747372). Other inorganic anions such as Br(-), I(-) and NO3(-) may also act as counteranions that exchange for urate (By similarity). Also mediates orotate tubular uptake coupled with nicotinate efflux and to a lesser extent with lactate efflux, therefore displaying a potential role in orotate renal reabsorption. Orotate transport is Cl(-)-dependent (By similarity).</text>
</comment>
<comment type="catalytic activity">
    <reaction evidence="3">
        <text>urate(out) + (S)-lactate(in) = urate(in) + (S)-lactate(out)</text>
        <dbReference type="Rhea" id="RHEA:72003"/>
        <dbReference type="ChEBI" id="CHEBI:16651"/>
        <dbReference type="ChEBI" id="CHEBI:17775"/>
    </reaction>
</comment>
<comment type="catalytic activity">
    <reaction evidence="1">
        <text>nicotinate(in) + urate(out) = nicotinate(out) + urate(in)</text>
        <dbReference type="Rhea" id="RHEA:72023"/>
        <dbReference type="ChEBI" id="CHEBI:17775"/>
        <dbReference type="ChEBI" id="CHEBI:32544"/>
    </reaction>
</comment>
<comment type="catalytic activity">
    <reaction evidence="7">
        <text>urate(out) + n chloride(in) = urate(in) + n chloride(out)</text>
        <dbReference type="Rhea" id="RHEA:72319"/>
        <dbReference type="ChEBI" id="CHEBI:17775"/>
        <dbReference type="ChEBI" id="CHEBI:17996"/>
    </reaction>
</comment>
<comment type="catalytic activity">
    <reaction evidence="1">
        <text>orotate(out) + nicotinate(in) = orotate(in) + nicotinate(out)</text>
        <dbReference type="Rhea" id="RHEA:72039"/>
        <dbReference type="ChEBI" id="CHEBI:30839"/>
        <dbReference type="ChEBI" id="CHEBI:32544"/>
    </reaction>
</comment>
<comment type="biophysicochemical properties">
    <kinetics>
        <KM evidence="3">1213 uM for urate</KM>
    </kinetics>
</comment>
<comment type="subunit">
    <text evidence="1">Interacts with PDZK1.</text>
</comment>
<comment type="subcellular location">
    <subcellularLocation>
        <location evidence="3">Apical cell membrane</location>
        <topology evidence="2">Multi-pass membrane protein</topology>
    </subcellularLocation>
</comment>
<comment type="tissue specificity">
    <text evidence="3 4">Detected in kidney (at protein level). Detected in kidney cortex, in proximal tubules.</text>
</comment>
<comment type="PTM">
    <text evidence="3">N-glycosylated.</text>
</comment>
<comment type="similarity">
    <text evidence="6">Belongs to the major facilitator (TC 2.A.1) superfamily. Organic cation transporter (TC 2.A.1.19) family.</text>
</comment>
<name>S22AC_MOUSE</name>
<proteinExistence type="evidence at protein level"/>
<gene>
    <name evidence="8" type="primary">Slc22a12</name>
    <name evidence="5" type="synonym">Urat1</name>
</gene>
<evidence type="ECO:0000250" key="1">
    <source>
        <dbReference type="UniProtKB" id="Q96S37"/>
    </source>
</evidence>
<evidence type="ECO:0000255" key="2"/>
<evidence type="ECO:0000269" key="3">
    <source>
    </source>
</evidence>
<evidence type="ECO:0000269" key="4">
    <source>
    </source>
</evidence>
<evidence type="ECO:0000303" key="5">
    <source>
    </source>
</evidence>
<evidence type="ECO:0000305" key="6"/>
<evidence type="ECO:0000305" key="7">
    <source>
    </source>
</evidence>
<evidence type="ECO:0000312" key="8">
    <source>
        <dbReference type="MGI" id="MGI:1195269"/>
    </source>
</evidence>
<evidence type="ECO:0007744" key="9">
    <source>
    </source>
</evidence>
<reference key="1">
    <citation type="journal article" date="1997" name="FEBS Lett.">
        <title>Kidney-specific expression of a novel mouse organic cation transporter-like protein.</title>
        <authorList>
            <person name="Mori K."/>
            <person name="Ogawa Y."/>
            <person name="Ebihara K."/>
            <person name="Aoki T."/>
            <person name="Tamura N."/>
            <person name="Sugawara A."/>
            <person name="Kuwahara T."/>
            <person name="Ozaki S."/>
            <person name="Mukoyama M."/>
            <person name="Tashiro K."/>
            <person name="Tanaka I."/>
            <person name="Nakao K."/>
        </authorList>
    </citation>
    <scope>NUCLEOTIDE SEQUENCE [MRNA]</scope>
    <scope>TISSUE SPECIFICITY</scope>
    <source>
        <tissue>Kidney</tissue>
    </source>
</reference>
<reference key="2">
    <citation type="journal article" date="2004" name="Genome Res.">
        <title>The status, quality, and expansion of the NIH full-length cDNA project: the Mammalian Gene Collection (MGC).</title>
        <authorList>
            <consortium name="The MGC Project Team"/>
        </authorList>
    </citation>
    <scope>NUCLEOTIDE SEQUENCE [LARGE SCALE MRNA]</scope>
    <source>
        <strain>FVB/N</strain>
        <tissue>Kidney</tissue>
    </source>
</reference>
<reference key="3">
    <citation type="journal article" date="2004" name="J. Am. Soc. Nephrol.">
        <title>Function and localization of urate transporter 1 in mouse kidney.</title>
        <authorList>
            <person name="Hosoyamada M."/>
            <person name="Ichida K."/>
            <person name="Enomoto A."/>
            <person name="Hosoya T."/>
            <person name="Endou H."/>
        </authorList>
    </citation>
    <scope>FUNCTION</scope>
    <scope>TRANSPORTER ACTIVITY</scope>
    <scope>BIOPHYSICOCHEMICAL PROPERTIES</scope>
    <scope>SUBCELLULAR LOCATION</scope>
    <scope>TISSUE SPECIFICITY</scope>
    <scope>GLYCOSYLATION</scope>
</reference>
<reference key="4">
    <citation type="journal article" date="2010" name="Cell">
        <title>A tissue-specific atlas of mouse protein phosphorylation and expression.</title>
        <authorList>
            <person name="Huttlin E.L."/>
            <person name="Jedrychowski M.P."/>
            <person name="Elias J.E."/>
            <person name="Goswami T."/>
            <person name="Rad R."/>
            <person name="Beausoleil S.A."/>
            <person name="Villen J."/>
            <person name="Haas W."/>
            <person name="Sowa M.E."/>
            <person name="Gygi S.P."/>
        </authorList>
    </citation>
    <scope>PHOSPHORYLATION [LARGE SCALE ANALYSIS] AT SER-534 AND THR-542</scope>
    <scope>IDENTIFICATION BY MASS SPECTROMETRY [LARGE SCALE ANALYSIS]</scope>
    <source>
        <tissue>Kidney</tissue>
    </source>
</reference>
<protein>
    <recommendedName>
        <fullName evidence="1">Solute carrier family 22 member 12</fullName>
    </recommendedName>
    <alternativeName>
        <fullName evidence="5">Renal-specific transporter</fullName>
        <shortName evidence="5">RST</shortName>
    </alternativeName>
    <alternativeName>
        <fullName evidence="5">Urate anion exchanger 1</fullName>
        <shortName evidence="5">URAT1</shortName>
    </alternativeName>
    <alternativeName>
        <fullName evidence="5">Urate:anion antiporter SLC22A12</fullName>
    </alternativeName>
</protein>
<organism>
    <name type="scientific">Mus musculus</name>
    <name type="common">Mouse</name>
    <dbReference type="NCBI Taxonomy" id="10090"/>
    <lineage>
        <taxon>Eukaryota</taxon>
        <taxon>Metazoa</taxon>
        <taxon>Chordata</taxon>
        <taxon>Craniata</taxon>
        <taxon>Vertebrata</taxon>
        <taxon>Euteleostomi</taxon>
        <taxon>Mammalia</taxon>
        <taxon>Eutheria</taxon>
        <taxon>Euarchontoglires</taxon>
        <taxon>Glires</taxon>
        <taxon>Rodentia</taxon>
        <taxon>Myomorpha</taxon>
        <taxon>Muroidea</taxon>
        <taxon>Muridae</taxon>
        <taxon>Murinae</taxon>
        <taxon>Mus</taxon>
        <taxon>Mus</taxon>
    </lineage>
</organism>
<sequence length="553" mass="60194">MAFPELLDRVGGLGRFQLFQTVALVTPILWVTTQNMLENFSAAVPHHRCWVPLLDNSTSQASIPGDLGPDVLLAVSIPPGPDQQPHQCLRFRQPQWQLTESNATATNWSDAATEPCEDGWVYDHSTFRSTIVTTWDLVCNSQALRPMAQSIFLAGILVGAAVCGHASDRFGRRRVLTWSYLLVSVSGTAAAFMPTFPLYCLFRFLLASAVAGVMMNTASLLMEWTSAQGSPLVMTLNALGFSFGQVLTGSVAYGVRSWRMLQLAVSAPFFLFFVYSWWLPESARWLITVGKLDQGLQELQRVAAVNRRKAEGDTLTMEVLRSAMEEEPSRDKAGASLGTLLHTPGLRHRTIISMLCWFAFGFTFYGLALDLQALGSNIFLLQALIGIVDFPVKTGSLLLISRLGRRFCQVSFLVLPGLCILSNILVPHGMGVLRSALAVLGLGCLGGAFTCITIFSSELFPTVIRMTAVGLCQVAARGGAMLGPLVRLLGVYGSWMPLLVYGVVPVLSGLAALLLPETKNLPLPDTIQDIQKQSVKKVTHDTPDGSILMSTRL</sequence>